<comment type="function">
    <text evidence="1">Splicing factor binding to exonic or intronic sites and acting as either an activator or repressor of exon inclusion. Exhibits a binding preference for CA-rich elements. Component of the heterogeneous nuclear ribonucleoprotein (hnRNP) complexes and associated with most nascent transcripts. Associates, together with APEX1, to the negative calcium responsive element (nCaRE) B2 of the APEX2 promoter. As part of a ribonucleoprotein complex composed at least of ZNF827, HNRNPK and the circular RNA circZNF827 that nucleates the complex on chromatin, may negatively regulate the transcription of genes involved in neuronal differentiation (By similarity). Regulates alternative splicing of a core group of genes involved in neuronal differentiation, likely by mediating H3K36me3-coupled transcription elongation and co-transcriptional RNA processing via interaction with CHD8.</text>
</comment>
<comment type="subunit">
    <text evidence="1 5">Identified in a IGF2BP1-dependent mRNP granule complex containing untranslated mRNAs. Interacts with HNRNPLL. Interacts with APEX1; the interaction is DNA-dependent. Component of a complex with SETD2 (By similarity). Interacts with ELAVL1 (PubMed:18161049). Part of a transcription inhibitory ribonucleoprotein complex composed at least of the circular RNA circZNF827, ZNF827 and HNRNPK (By similarity). Interacts with CHD8 in an RNA-dependent manner.</text>
</comment>
<comment type="subcellular location">
    <subcellularLocation>
        <location evidence="1">Nucleus</location>
        <location evidence="1">Nucleoplasm</location>
    </subcellularLocation>
    <subcellularLocation>
        <location evidence="5">Cytoplasm</location>
    </subcellularLocation>
    <text evidence="1">Localized in cytoplasmic mRNP granules containing untranslated mRNAs. These granules are not identical with P bodies or stress granules.</text>
</comment>
<comment type="alternative products">
    <event type="alternative splicing"/>
    <isoform>
        <id>F1LQ48-1</id>
        <name>1</name>
        <sequence type="displayed"/>
    </isoform>
    <isoform>
        <id>F1LQ48-2</id>
        <name>2</name>
        <sequence type="described" ref="VSP_058247"/>
    </isoform>
</comment>
<comment type="domain">
    <text evidence="1">RRM domain 2 has moderate RNA-binding affinity. RRM domains 3 and 4 may facilitate RNA looping when binding to two appropriately separated binding sites within the same target pre-mRNA.</text>
</comment>
<comment type="PTM">
    <text evidence="1">Several isoelectric forms of the L protein are probably the results of post-translational modifications.</text>
</comment>
<comment type="PTM">
    <text evidence="1">Phosphorylation at Ser-578 by CaMK4 enhances interaction with a CaMK4-responsive RNA element (CaRRE1), and prevents inclusion of the stress axis-regulated exon (STREX) of the KCNMA1 potassium channel transcripts upon membrane depolarization.</text>
</comment>
<dbReference type="EMBL" id="AB260892">
    <property type="protein sequence ID" value="BAG72209.1"/>
    <property type="molecule type" value="mRNA"/>
</dbReference>
<dbReference type="EMBL" id="AABR07002851">
    <property type="status" value="NOT_ANNOTATED_CDS"/>
    <property type="molecule type" value="Genomic_DNA"/>
</dbReference>
<dbReference type="EMBL" id="BC086392">
    <property type="protein sequence ID" value="AAH86392.1"/>
    <property type="molecule type" value="mRNA"/>
</dbReference>
<dbReference type="RefSeq" id="NP_001128232.1">
    <molecule id="F1LQ48-1"/>
    <property type="nucleotide sequence ID" value="NM_001134760.1"/>
</dbReference>
<dbReference type="PDB" id="2MQL">
    <property type="method" value="NMR"/>
    <property type="chains" value="A=86-190"/>
</dbReference>
<dbReference type="PDB" id="2MQM">
    <property type="method" value="NMR"/>
    <property type="chains" value="A=174-291"/>
</dbReference>
<dbReference type="PDB" id="2MQN">
    <property type="method" value="NMR"/>
    <property type="chains" value="A=408-623"/>
</dbReference>
<dbReference type="PDB" id="2MQO">
    <property type="method" value="NMR"/>
    <property type="chains" value="A=86-190"/>
</dbReference>
<dbReference type="PDB" id="2MQP">
    <property type="method" value="NMR"/>
    <property type="chains" value="A=174-291"/>
</dbReference>
<dbReference type="PDB" id="2MQQ">
    <property type="method" value="NMR"/>
    <property type="chains" value="A=409-623"/>
</dbReference>
<dbReference type="PDB" id="4QPT">
    <property type="method" value="X-ray"/>
    <property type="resolution" value="1.35 A"/>
    <property type="chains" value="A=409-623"/>
</dbReference>
<dbReference type="PDBsum" id="2MQL"/>
<dbReference type="PDBsum" id="2MQM"/>
<dbReference type="PDBsum" id="2MQN"/>
<dbReference type="PDBsum" id="2MQO"/>
<dbReference type="PDBsum" id="2MQP"/>
<dbReference type="PDBsum" id="2MQQ"/>
<dbReference type="PDBsum" id="4QPT"/>
<dbReference type="SMR" id="F1LQ48"/>
<dbReference type="FunCoup" id="F1LQ48">
    <property type="interactions" value="4357"/>
</dbReference>
<dbReference type="IntAct" id="F1LQ48">
    <property type="interactions" value="4"/>
</dbReference>
<dbReference type="MINT" id="F1LQ48"/>
<dbReference type="STRING" id="10116.ENSRNOP00000027425"/>
<dbReference type="iPTMnet" id="F1LQ48"/>
<dbReference type="PhosphoSitePlus" id="F1LQ48"/>
<dbReference type="jPOST" id="F1LQ48"/>
<dbReference type="PaxDb" id="10116-ENSRNOP00000027425"/>
<dbReference type="GeneID" id="80846"/>
<dbReference type="KEGG" id="rno:80846"/>
<dbReference type="UCSC" id="RGD:1359551">
    <property type="organism name" value="rat"/>
</dbReference>
<dbReference type="AGR" id="RGD:1359551"/>
<dbReference type="AGR" id="RGD:71059"/>
<dbReference type="CTD" id="3191"/>
<dbReference type="RGD" id="71059">
    <property type="gene designation" value="Hnrnpl"/>
</dbReference>
<dbReference type="VEuPathDB" id="HostDB:ENSRNOG00000020235"/>
<dbReference type="eggNOG" id="KOG1456">
    <property type="taxonomic scope" value="Eukaryota"/>
</dbReference>
<dbReference type="InParanoid" id="F1LQ48"/>
<dbReference type="TreeFam" id="TF354318"/>
<dbReference type="Reactome" id="R-RNO-72163">
    <property type="pathway name" value="mRNA Splicing - Major Pathway"/>
</dbReference>
<dbReference type="Reactome" id="R-RNO-72203">
    <property type="pathway name" value="Processing of Capped Intron-Containing Pre-mRNA"/>
</dbReference>
<dbReference type="EvolutionaryTrace" id="F1LQ48"/>
<dbReference type="PRO" id="PR:F1LQ48"/>
<dbReference type="Proteomes" id="UP000002494">
    <property type="component" value="Chromosome 1"/>
</dbReference>
<dbReference type="Bgee" id="ENSRNOG00000020235">
    <property type="expression patterns" value="Expressed in thymus and 19 other cell types or tissues"/>
</dbReference>
<dbReference type="ExpressionAtlas" id="F1LQ48">
    <property type="expression patterns" value="baseline and differential"/>
</dbReference>
<dbReference type="GO" id="GO:0000785">
    <property type="term" value="C:chromatin"/>
    <property type="evidence" value="ECO:0000250"/>
    <property type="project" value="UniProtKB"/>
</dbReference>
<dbReference type="GO" id="GO:0005737">
    <property type="term" value="C:cytoplasm"/>
    <property type="evidence" value="ECO:0000266"/>
    <property type="project" value="RGD"/>
</dbReference>
<dbReference type="GO" id="GO:0005654">
    <property type="term" value="C:nucleoplasm"/>
    <property type="evidence" value="ECO:0000250"/>
    <property type="project" value="UniProtKB"/>
</dbReference>
<dbReference type="GO" id="GO:0005634">
    <property type="term" value="C:nucleus"/>
    <property type="evidence" value="ECO:0000266"/>
    <property type="project" value="RGD"/>
</dbReference>
<dbReference type="GO" id="GO:0048471">
    <property type="term" value="C:perinuclear region of cytoplasm"/>
    <property type="evidence" value="ECO:0000314"/>
    <property type="project" value="RGD"/>
</dbReference>
<dbReference type="GO" id="GO:0045120">
    <property type="term" value="C:pronucleus"/>
    <property type="evidence" value="ECO:0000266"/>
    <property type="project" value="RGD"/>
</dbReference>
<dbReference type="GO" id="GO:1990904">
    <property type="term" value="C:ribonucleoprotein complex"/>
    <property type="evidence" value="ECO:0000250"/>
    <property type="project" value="UniProtKB"/>
</dbReference>
<dbReference type="GO" id="GO:0035770">
    <property type="term" value="C:ribonucleoprotein granule"/>
    <property type="evidence" value="ECO:0000250"/>
    <property type="project" value="UniProtKB"/>
</dbReference>
<dbReference type="GO" id="GO:0045202">
    <property type="term" value="C:synapse"/>
    <property type="evidence" value="ECO:0000266"/>
    <property type="project" value="RGD"/>
</dbReference>
<dbReference type="GO" id="GO:0003730">
    <property type="term" value="F:mRNA 3'-UTR binding"/>
    <property type="evidence" value="ECO:0000314"/>
    <property type="project" value="RGD"/>
</dbReference>
<dbReference type="GO" id="GO:0003729">
    <property type="term" value="F:mRNA binding"/>
    <property type="evidence" value="ECO:0000318"/>
    <property type="project" value="GO_Central"/>
</dbReference>
<dbReference type="GO" id="GO:1990715">
    <property type="term" value="F:mRNA CDS binding"/>
    <property type="evidence" value="ECO:0000314"/>
    <property type="project" value="RGD"/>
</dbReference>
<dbReference type="GO" id="GO:0097157">
    <property type="term" value="F:pre-mRNA intronic binding"/>
    <property type="evidence" value="ECO:0000250"/>
    <property type="project" value="UniProtKB"/>
</dbReference>
<dbReference type="GO" id="GO:0003723">
    <property type="term" value="F:RNA binding"/>
    <property type="evidence" value="ECO:0000266"/>
    <property type="project" value="RGD"/>
</dbReference>
<dbReference type="GO" id="GO:0000976">
    <property type="term" value="F:transcription cis-regulatory region binding"/>
    <property type="evidence" value="ECO:0000250"/>
    <property type="project" value="UniProtKB"/>
</dbReference>
<dbReference type="GO" id="GO:0034198">
    <property type="term" value="P:cellular response to amino acid starvation"/>
    <property type="evidence" value="ECO:0000314"/>
    <property type="project" value="RGD"/>
</dbReference>
<dbReference type="GO" id="GO:0007623">
    <property type="term" value="P:circadian rhythm"/>
    <property type="evidence" value="ECO:0000270"/>
    <property type="project" value="RGD"/>
</dbReference>
<dbReference type="GO" id="GO:0006397">
    <property type="term" value="P:mRNA processing"/>
    <property type="evidence" value="ECO:0007669"/>
    <property type="project" value="InterPro"/>
</dbReference>
<dbReference type="GO" id="GO:0045892">
    <property type="term" value="P:negative regulation of DNA-templated transcription"/>
    <property type="evidence" value="ECO:0000250"/>
    <property type="project" value="UniProtKB"/>
</dbReference>
<dbReference type="GO" id="GO:0048025">
    <property type="term" value="P:negative regulation of mRNA splicing, via spliceosome"/>
    <property type="evidence" value="ECO:0000315"/>
    <property type="project" value="RGD"/>
</dbReference>
<dbReference type="GO" id="GO:0045727">
    <property type="term" value="P:positive regulation of translation"/>
    <property type="evidence" value="ECO:0000315"/>
    <property type="project" value="RGD"/>
</dbReference>
<dbReference type="GO" id="GO:0000381">
    <property type="term" value="P:regulation of alternative mRNA splicing, via spliceosome"/>
    <property type="evidence" value="ECO:0000250"/>
    <property type="project" value="UniProtKB"/>
</dbReference>
<dbReference type="GO" id="GO:0043484">
    <property type="term" value="P:regulation of RNA splicing"/>
    <property type="evidence" value="ECO:0000318"/>
    <property type="project" value="GO_Central"/>
</dbReference>
<dbReference type="GO" id="GO:1901652">
    <property type="term" value="P:response to peptide"/>
    <property type="evidence" value="ECO:0000270"/>
    <property type="project" value="RGD"/>
</dbReference>
<dbReference type="CDD" id="cd12780">
    <property type="entry name" value="RRM1_hnRNPL"/>
    <property type="match status" value="1"/>
</dbReference>
<dbReference type="CDD" id="cd12785">
    <property type="entry name" value="RRM2_hnRNPL"/>
    <property type="match status" value="1"/>
</dbReference>
<dbReference type="CDD" id="cd12699">
    <property type="entry name" value="RRM3_hnRNPL"/>
    <property type="match status" value="1"/>
</dbReference>
<dbReference type="CDD" id="cd12704">
    <property type="entry name" value="RRM4_hnRNPL"/>
    <property type="match status" value="1"/>
</dbReference>
<dbReference type="FunFam" id="3.30.70.330:FF:000072">
    <property type="entry name" value="heterogeneous nuclear ribonucleoprotein L isoform X1"/>
    <property type="match status" value="1"/>
</dbReference>
<dbReference type="FunFam" id="3.30.70.330:FF:000052">
    <property type="entry name" value="Heterogeneous nuclear ribonucleoprotein L like"/>
    <property type="match status" value="1"/>
</dbReference>
<dbReference type="FunFam" id="3.30.70.330:FF:000073">
    <property type="entry name" value="Heterogeneous nuclear ribonucleoprotein L like"/>
    <property type="match status" value="1"/>
</dbReference>
<dbReference type="FunFam" id="3.30.70.330:FF:000104">
    <property type="entry name" value="Heterogeneous nuclear ribonucleoprotein L like"/>
    <property type="match status" value="1"/>
</dbReference>
<dbReference type="Gene3D" id="3.30.70.330">
    <property type="match status" value="4"/>
</dbReference>
<dbReference type="InterPro" id="IPR006536">
    <property type="entry name" value="HnRNP-L/PTB"/>
</dbReference>
<dbReference type="InterPro" id="IPR034816">
    <property type="entry name" value="hnRNP-L_RRM3"/>
</dbReference>
<dbReference type="InterPro" id="IPR055204">
    <property type="entry name" value="HNRNPL_RRM"/>
</dbReference>
<dbReference type="InterPro" id="IPR035005">
    <property type="entry name" value="hnRNPL_RRM1"/>
</dbReference>
<dbReference type="InterPro" id="IPR035008">
    <property type="entry name" value="hnRNPL_RRM2"/>
</dbReference>
<dbReference type="InterPro" id="IPR034817">
    <property type="entry name" value="hnRNPL_RRM4"/>
</dbReference>
<dbReference type="InterPro" id="IPR012677">
    <property type="entry name" value="Nucleotide-bd_a/b_plait_sf"/>
</dbReference>
<dbReference type="InterPro" id="IPR021790">
    <property type="entry name" value="PTBP1-like_RRM2"/>
</dbReference>
<dbReference type="InterPro" id="IPR035979">
    <property type="entry name" value="RBD_domain_sf"/>
</dbReference>
<dbReference type="InterPro" id="IPR000504">
    <property type="entry name" value="RRM_dom"/>
</dbReference>
<dbReference type="NCBIfam" id="TIGR01649">
    <property type="entry name" value="hnRNP-L_PTB"/>
    <property type="match status" value="2"/>
</dbReference>
<dbReference type="PANTHER" id="PTHR15592">
    <property type="entry name" value="MATRIN 3/NUCLEAR PROTEIN 220-RELATED"/>
    <property type="match status" value="1"/>
</dbReference>
<dbReference type="Pfam" id="PF00076">
    <property type="entry name" value="RRM_1"/>
    <property type="match status" value="1"/>
</dbReference>
<dbReference type="Pfam" id="PF22976">
    <property type="entry name" value="RRM_10"/>
    <property type="match status" value="1"/>
</dbReference>
<dbReference type="Pfam" id="PF13893">
    <property type="entry name" value="RRM_5"/>
    <property type="match status" value="1"/>
</dbReference>
<dbReference type="Pfam" id="PF11835">
    <property type="entry name" value="RRM_8"/>
    <property type="match status" value="1"/>
</dbReference>
<dbReference type="SMART" id="SM00360">
    <property type="entry name" value="RRM"/>
    <property type="match status" value="3"/>
</dbReference>
<dbReference type="SUPFAM" id="SSF54928">
    <property type="entry name" value="RNA-binding domain, RBD"/>
    <property type="match status" value="3"/>
</dbReference>
<dbReference type="PROSITE" id="PS50102">
    <property type="entry name" value="RRM"/>
    <property type="match status" value="3"/>
</dbReference>
<keyword id="KW-0002">3D-structure</keyword>
<keyword id="KW-0007">Acetylation</keyword>
<keyword id="KW-0025">Alternative splicing</keyword>
<keyword id="KW-0963">Cytoplasm</keyword>
<keyword id="KW-1017">Isopeptide bond</keyword>
<keyword id="KW-0488">Methylation</keyword>
<keyword id="KW-0539">Nucleus</keyword>
<keyword id="KW-0597">Phosphoprotein</keyword>
<keyword id="KW-1185">Reference proteome</keyword>
<keyword id="KW-0677">Repeat</keyword>
<keyword id="KW-0687">Ribonucleoprotein</keyword>
<keyword id="KW-0694">RNA-binding</keyword>
<keyword id="KW-0832">Ubl conjugation</keyword>
<gene>
    <name evidence="9" type="primary">Hnrnpl</name>
    <name type="synonym">Fblim1</name>
</gene>
<feature type="chain" id="PRO_0000436064" description="Heterogeneous nuclear ribonucleoprotein L">
    <location>
        <begin position="1"/>
        <end position="623"/>
    </location>
</feature>
<feature type="domain" description="RRM 1" evidence="3">
    <location>
        <begin position="99"/>
        <end position="173"/>
    </location>
</feature>
<feature type="domain" description="RRM 2" evidence="3">
    <location>
        <begin position="190"/>
        <end position="267"/>
    </location>
</feature>
<feature type="domain" description="RRM 3" evidence="3">
    <location>
        <begin position="416"/>
        <end position="490"/>
    </location>
</feature>
<feature type="domain" description="RRM 4" evidence="6">
    <location>
        <begin position="498"/>
        <end position="586"/>
    </location>
</feature>
<feature type="region of interest" description="Disordered" evidence="4">
    <location>
        <begin position="1"/>
        <end position="97"/>
    </location>
</feature>
<feature type="region of interest" description="Disordered" evidence="4">
    <location>
        <begin position="281"/>
        <end position="413"/>
    </location>
</feature>
<feature type="compositionally biased region" description="Basic residues" evidence="4">
    <location>
        <begin position="1"/>
        <end position="16"/>
    </location>
</feature>
<feature type="compositionally biased region" description="Basic and acidic residues" evidence="4">
    <location>
        <begin position="17"/>
        <end position="27"/>
    </location>
</feature>
<feature type="compositionally biased region" description="Low complexity" evidence="4">
    <location>
        <begin position="28"/>
        <end position="37"/>
    </location>
</feature>
<feature type="compositionally biased region" description="Gly residues" evidence="4">
    <location>
        <begin position="38"/>
        <end position="54"/>
    </location>
</feature>
<feature type="compositionally biased region" description="Gly residues" evidence="4">
    <location>
        <begin position="69"/>
        <end position="87"/>
    </location>
</feature>
<feature type="compositionally biased region" description="Polar residues" evidence="4">
    <location>
        <begin position="281"/>
        <end position="298"/>
    </location>
</feature>
<feature type="compositionally biased region" description="Pro residues" evidence="4">
    <location>
        <begin position="398"/>
        <end position="409"/>
    </location>
</feature>
<feature type="modified residue" description="Phosphoserine" evidence="1">
    <location>
        <position position="98"/>
    </location>
</feature>
<feature type="modified residue" description="Phosphoserine" evidence="1">
    <location>
        <position position="182"/>
    </location>
</feature>
<feature type="modified residue" description="N6-acetyllysine" evidence="1">
    <location>
        <position position="266"/>
    </location>
</feature>
<feature type="modified residue" description="Phosphoserine" evidence="1">
    <location>
        <position position="288"/>
    </location>
</feature>
<feature type="modified residue" description="Phosphoserine" evidence="1">
    <location>
        <position position="295"/>
    </location>
</feature>
<feature type="modified residue" description="Asymmetric dimethylarginine" evidence="2">
    <location>
        <position position="388"/>
    </location>
</feature>
<feature type="modified residue" description="Asymmetric dimethylarginine" evidence="2">
    <location>
        <position position="392"/>
    </location>
</feature>
<feature type="modified residue" description="Phosphoserine" evidence="2">
    <location>
        <position position="415"/>
    </location>
</feature>
<feature type="modified residue" description="Phosphoserine; by CaMK4" evidence="1">
    <location>
        <position position="578"/>
    </location>
</feature>
<feature type="cross-link" description="Glycyl lysine isopeptide (Lys-Gly) (interchain with G-Cter in SUMO2)" evidence="1">
    <location>
        <position position="59"/>
    </location>
</feature>
<feature type="cross-link" description="Glycyl lysine isopeptide (Lys-Gly) (interchain with G-Cter in SUMO2)" evidence="1">
    <location>
        <position position="62"/>
    </location>
</feature>
<feature type="cross-link" description="Glycyl lysine isopeptide (Lys-Gly) (interchain with G-Cter in SUMO2)" evidence="1">
    <location>
        <position position="133"/>
    </location>
</feature>
<feature type="cross-link" description="Glycyl lysine isopeptide (Lys-Gly) (interchain with G-Cter in SUMO2)" evidence="1">
    <location>
        <position position="299"/>
    </location>
</feature>
<feature type="cross-link" description="Glycyl lysine isopeptide (Lys-Gly) (interchain with G-Cter in SUMO2)" evidence="1">
    <location>
        <position position="602"/>
    </location>
</feature>
<feature type="splice variant" id="VSP_058247" description="In isoform 2.">
    <location>
        <begin position="1"/>
        <end position="378"/>
    </location>
</feature>
<feature type="strand" evidence="16">
    <location>
        <begin position="99"/>
        <end position="104"/>
    </location>
</feature>
<feature type="helix" evidence="16">
    <location>
        <begin position="112"/>
        <end position="119"/>
    </location>
</feature>
<feature type="helix" evidence="18">
    <location>
        <begin position="120"/>
        <end position="122"/>
    </location>
</feature>
<feature type="strand" evidence="16">
    <location>
        <begin position="125"/>
        <end position="131"/>
    </location>
</feature>
<feature type="turn" evidence="16">
    <location>
        <begin position="132"/>
        <end position="135"/>
    </location>
</feature>
<feature type="strand" evidence="16">
    <location>
        <begin position="136"/>
        <end position="143"/>
    </location>
</feature>
<feature type="helix" evidence="16">
    <location>
        <begin position="144"/>
        <end position="148"/>
    </location>
</feature>
<feature type="helix" evidence="16">
    <location>
        <begin position="151"/>
        <end position="154"/>
    </location>
</feature>
<feature type="strand" evidence="16">
    <location>
        <begin position="159"/>
        <end position="170"/>
    </location>
</feature>
<feature type="strand" evidence="18">
    <location>
        <begin position="172"/>
        <end position="174"/>
    </location>
</feature>
<feature type="turn" evidence="19">
    <location>
        <begin position="179"/>
        <end position="181"/>
    </location>
</feature>
<feature type="helix" evidence="17">
    <location>
        <begin position="182"/>
        <end position="185"/>
    </location>
</feature>
<feature type="strand" evidence="18">
    <location>
        <begin position="186"/>
        <end position="188"/>
    </location>
</feature>
<feature type="strand" evidence="17">
    <location>
        <begin position="190"/>
        <end position="198"/>
    </location>
</feature>
<feature type="helix" evidence="17">
    <location>
        <begin position="205"/>
        <end position="212"/>
    </location>
</feature>
<feature type="helix" evidence="17">
    <location>
        <begin position="213"/>
        <end position="215"/>
    </location>
</feature>
<feature type="strand" evidence="17">
    <location>
        <begin position="218"/>
        <end position="224"/>
    </location>
</feature>
<feature type="strand" evidence="17">
    <location>
        <begin position="226"/>
        <end position="228"/>
    </location>
</feature>
<feature type="strand" evidence="17">
    <location>
        <begin position="230"/>
        <end position="237"/>
    </location>
</feature>
<feature type="helix" evidence="17">
    <location>
        <begin position="238"/>
        <end position="248"/>
    </location>
</feature>
<feature type="strand" evidence="17">
    <location>
        <begin position="253"/>
        <end position="258"/>
    </location>
</feature>
<feature type="strand" evidence="17">
    <location>
        <begin position="260"/>
        <end position="264"/>
    </location>
</feature>
<feature type="strand" evidence="17">
    <location>
        <begin position="266"/>
        <end position="268"/>
    </location>
</feature>
<feature type="strand" evidence="17">
    <location>
        <begin position="276"/>
        <end position="284"/>
    </location>
</feature>
<feature type="helix" evidence="19">
    <location>
        <begin position="285"/>
        <end position="289"/>
    </location>
</feature>
<feature type="strand" evidence="21">
    <location>
        <begin position="411"/>
        <end position="421"/>
    </location>
</feature>
<feature type="turn" evidence="21">
    <location>
        <begin position="425"/>
        <end position="427"/>
    </location>
</feature>
<feature type="helix" evidence="21">
    <location>
        <begin position="430"/>
        <end position="437"/>
    </location>
</feature>
<feature type="turn" evidence="21">
    <location>
        <begin position="438"/>
        <end position="440"/>
    </location>
</feature>
<feature type="strand" evidence="21">
    <location>
        <begin position="443"/>
        <end position="448"/>
    </location>
</feature>
<feature type="strand" evidence="21">
    <location>
        <begin position="450"/>
        <end position="452"/>
    </location>
</feature>
<feature type="strand" evidence="21">
    <location>
        <begin position="456"/>
        <end position="462"/>
    </location>
</feature>
<feature type="helix" evidence="21">
    <location>
        <begin position="463"/>
        <end position="473"/>
    </location>
</feature>
<feature type="strand" evidence="20">
    <location>
        <begin position="476"/>
        <end position="478"/>
    </location>
</feature>
<feature type="strand" evidence="21">
    <location>
        <begin position="484"/>
        <end position="487"/>
    </location>
</feature>
<feature type="strand" evidence="20">
    <location>
        <begin position="502"/>
        <end position="505"/>
    </location>
</feature>
<feature type="strand" evidence="21">
    <location>
        <begin position="506"/>
        <end position="510"/>
    </location>
</feature>
<feature type="helix" evidence="21">
    <location>
        <begin position="522"/>
        <end position="525"/>
    </location>
</feature>
<feature type="strand" evidence="21">
    <location>
        <begin position="535"/>
        <end position="542"/>
    </location>
</feature>
<feature type="helix" evidence="21">
    <location>
        <begin position="548"/>
        <end position="558"/>
    </location>
</feature>
<feature type="strand" evidence="21">
    <location>
        <begin position="564"/>
        <end position="568"/>
    </location>
</feature>
<feature type="strand" evidence="21">
    <location>
        <begin position="575"/>
        <end position="582"/>
    </location>
</feature>
<feature type="helix" evidence="21">
    <location>
        <begin position="586"/>
        <end position="596"/>
    </location>
</feature>
<feature type="strand" evidence="21">
    <location>
        <begin position="606"/>
        <end position="608"/>
    </location>
</feature>
<feature type="strand" evidence="21">
    <location>
        <begin position="613"/>
        <end position="616"/>
    </location>
</feature>
<accession>F1LQ48</accession>
<accession>F1LPP9</accession>
<accession>Q5U1Y5</accession>
<sequence>MSRRLLPRAEKRRRRLEQRQQPDEQLRRAGAMVKMAAAGGGGGGGRYYGGGNEGGRAPKRLKTENAGDQHGGGGGGGSGAAGGGGGENYDDPHKTPASPVVHIRGLIDGVVEADLVEALQEFGPISYVVVMPKKRQALVEFEDVLGACNAVNYAADNQIYIAGHPAFVNYSTSQKISRPGDSDDSRSVNSVLLFTILNPIYSITTDVLYTICNPCGPVQRIVIFRKNGVQAMVEFDSVQSAQRAKASLNGADIYSGCCTLKIEYAKPTRLNVFKNDQDTWDYTNPNLSGQGDPGSNPNKRQRQPPLLGDHPAEYGEGRGFPSVDSRGSCAPARRPPRKFSPVLPLFPSHPPGGPHGGYHSHYHDEGYGPPPPHYEGRRMGPPVGGHRRGPSRYGPQYGHPPPPPPPPDYGPHADSPVLMVYGLDQSKMNCDRVFNVFCLYGNVEKVKFMKSKPGAAMVEMADGYAVDRAITHLNNNFMFGQKMNVCVSKQPAIMPGQSYGLEDGSCSYKDFSESRNNRFSTPEQAAKNRIQHPSNVLHFFNAPLEVTEENFFEICDELGVKRPTSVKVFSGKSERSSSGLLEWDSKSDALETLGFLNHYQMKNPNGPYPYTLKLCFSTAQHAS</sequence>
<proteinExistence type="evidence at protein level"/>
<name>HNRPL_RAT</name>
<reference evidence="8" key="1">
    <citation type="journal article" date="2008" name="Hepatology">
        <title>Natural antisense transcript stabilizes inducible nitric oxide synthase messenger RNA in rat hepatocytes.</title>
        <authorList>
            <person name="Matsui K."/>
            <person name="Nishizawa M."/>
            <person name="Ozaki T."/>
            <person name="Kimura T."/>
            <person name="Hashimoto I."/>
            <person name="Yamada M."/>
            <person name="Kaibori M."/>
            <person name="Kamiyama Y."/>
            <person name="Ito S."/>
            <person name="Okumura T."/>
        </authorList>
    </citation>
    <scope>NUCLEOTIDE SEQUENCE [MRNA] (ISOFORM 2)</scope>
    <scope>SUBCELLULAR LOCATION</scope>
    <scope>INTERACTION WITH ELAVL1</scope>
    <source>
        <strain evidence="8">Wistar</strain>
    </source>
</reference>
<reference key="2">
    <citation type="journal article" date="2004" name="Nature">
        <title>Genome sequence of the Brown Norway rat yields insights into mammalian evolution.</title>
        <authorList>
            <person name="Gibbs R.A."/>
            <person name="Weinstock G.M."/>
            <person name="Metzker M.L."/>
            <person name="Muzny D.M."/>
            <person name="Sodergren E.J."/>
            <person name="Scherer S."/>
            <person name="Scott G."/>
            <person name="Steffen D."/>
            <person name="Worley K.C."/>
            <person name="Burch P.E."/>
            <person name="Okwuonu G."/>
            <person name="Hines S."/>
            <person name="Lewis L."/>
            <person name="Deramo C."/>
            <person name="Delgado O."/>
            <person name="Dugan-Rocha S."/>
            <person name="Miner G."/>
            <person name="Morgan M."/>
            <person name="Hawes A."/>
            <person name="Gill R."/>
            <person name="Holt R.A."/>
            <person name="Adams M.D."/>
            <person name="Amanatides P.G."/>
            <person name="Baden-Tillson H."/>
            <person name="Barnstead M."/>
            <person name="Chin S."/>
            <person name="Evans C.A."/>
            <person name="Ferriera S."/>
            <person name="Fosler C."/>
            <person name="Glodek A."/>
            <person name="Gu Z."/>
            <person name="Jennings D."/>
            <person name="Kraft C.L."/>
            <person name="Nguyen T."/>
            <person name="Pfannkoch C.M."/>
            <person name="Sitter C."/>
            <person name="Sutton G.G."/>
            <person name="Venter J.C."/>
            <person name="Woodage T."/>
            <person name="Smith D."/>
            <person name="Lee H.-M."/>
            <person name="Gustafson E."/>
            <person name="Cahill P."/>
            <person name="Kana A."/>
            <person name="Doucette-Stamm L."/>
            <person name="Weinstock K."/>
            <person name="Fechtel K."/>
            <person name="Weiss R.B."/>
            <person name="Dunn D.M."/>
            <person name="Green E.D."/>
            <person name="Blakesley R.W."/>
            <person name="Bouffard G.G."/>
            <person name="De Jong P.J."/>
            <person name="Osoegawa K."/>
            <person name="Zhu B."/>
            <person name="Marra M."/>
            <person name="Schein J."/>
            <person name="Bosdet I."/>
            <person name="Fjell C."/>
            <person name="Jones S."/>
            <person name="Krzywinski M."/>
            <person name="Mathewson C."/>
            <person name="Siddiqui A."/>
            <person name="Wye N."/>
            <person name="McPherson J."/>
            <person name="Zhao S."/>
            <person name="Fraser C.M."/>
            <person name="Shetty J."/>
            <person name="Shatsman S."/>
            <person name="Geer K."/>
            <person name="Chen Y."/>
            <person name="Abramzon S."/>
            <person name="Nierman W.C."/>
            <person name="Havlak P.H."/>
            <person name="Chen R."/>
            <person name="Durbin K.J."/>
            <person name="Egan A."/>
            <person name="Ren Y."/>
            <person name="Song X.-Z."/>
            <person name="Li B."/>
            <person name="Liu Y."/>
            <person name="Qin X."/>
            <person name="Cawley S."/>
            <person name="Cooney A.J."/>
            <person name="D'Souza L.M."/>
            <person name="Martin K."/>
            <person name="Wu J.Q."/>
            <person name="Gonzalez-Garay M.L."/>
            <person name="Jackson A.R."/>
            <person name="Kalafus K.J."/>
            <person name="McLeod M.P."/>
            <person name="Milosavljevic A."/>
            <person name="Virk D."/>
            <person name="Volkov A."/>
            <person name="Wheeler D.A."/>
            <person name="Zhang Z."/>
            <person name="Bailey J.A."/>
            <person name="Eichler E.E."/>
            <person name="Tuzun E."/>
            <person name="Birney E."/>
            <person name="Mongin E."/>
            <person name="Ureta-Vidal A."/>
            <person name="Woodwark C."/>
            <person name="Zdobnov E."/>
            <person name="Bork P."/>
            <person name="Suyama M."/>
            <person name="Torrents D."/>
            <person name="Alexandersson M."/>
            <person name="Trask B.J."/>
            <person name="Young J.M."/>
            <person name="Huang H."/>
            <person name="Wang H."/>
            <person name="Xing H."/>
            <person name="Daniels S."/>
            <person name="Gietzen D."/>
            <person name="Schmidt J."/>
            <person name="Stevens K."/>
            <person name="Vitt U."/>
            <person name="Wingrove J."/>
            <person name="Camara F."/>
            <person name="Mar Alba M."/>
            <person name="Abril J.F."/>
            <person name="Guigo R."/>
            <person name="Smit A."/>
            <person name="Dubchak I."/>
            <person name="Rubin E.M."/>
            <person name="Couronne O."/>
            <person name="Poliakov A."/>
            <person name="Huebner N."/>
            <person name="Ganten D."/>
            <person name="Goesele C."/>
            <person name="Hummel O."/>
            <person name="Kreitler T."/>
            <person name="Lee Y.-A."/>
            <person name="Monti J."/>
            <person name="Schulz H."/>
            <person name="Zimdahl H."/>
            <person name="Himmelbauer H."/>
            <person name="Lehrach H."/>
            <person name="Jacob H.J."/>
            <person name="Bromberg S."/>
            <person name="Gullings-Handley J."/>
            <person name="Jensen-Seaman M.I."/>
            <person name="Kwitek A.E."/>
            <person name="Lazar J."/>
            <person name="Pasko D."/>
            <person name="Tonellato P.J."/>
            <person name="Twigger S."/>
            <person name="Ponting C.P."/>
            <person name="Duarte J.M."/>
            <person name="Rice S."/>
            <person name="Goodstadt L."/>
            <person name="Beatson S.A."/>
            <person name="Emes R.D."/>
            <person name="Winter E.E."/>
            <person name="Webber C."/>
            <person name="Brandt P."/>
            <person name="Nyakatura G."/>
            <person name="Adetobi M."/>
            <person name="Chiaromonte F."/>
            <person name="Elnitski L."/>
            <person name="Eswara P."/>
            <person name="Hardison R.C."/>
            <person name="Hou M."/>
            <person name="Kolbe D."/>
            <person name="Makova K."/>
            <person name="Miller W."/>
            <person name="Nekrutenko A."/>
            <person name="Riemer C."/>
            <person name="Schwartz S."/>
            <person name="Taylor J."/>
            <person name="Yang S."/>
            <person name="Zhang Y."/>
            <person name="Lindpaintner K."/>
            <person name="Andrews T.D."/>
            <person name="Caccamo M."/>
            <person name="Clamp M."/>
            <person name="Clarke L."/>
            <person name="Curwen V."/>
            <person name="Durbin R.M."/>
            <person name="Eyras E."/>
            <person name="Searle S.M."/>
            <person name="Cooper G.M."/>
            <person name="Batzoglou S."/>
            <person name="Brudno M."/>
            <person name="Sidow A."/>
            <person name="Stone E.A."/>
            <person name="Payseur B.A."/>
            <person name="Bourque G."/>
            <person name="Lopez-Otin C."/>
            <person name="Puente X.S."/>
            <person name="Chakrabarti K."/>
            <person name="Chatterji S."/>
            <person name="Dewey C."/>
            <person name="Pachter L."/>
            <person name="Bray N."/>
            <person name="Yap V.B."/>
            <person name="Caspi A."/>
            <person name="Tesler G."/>
            <person name="Pevzner P.A."/>
            <person name="Haussler D."/>
            <person name="Roskin K.M."/>
            <person name="Baertsch R."/>
            <person name="Clawson H."/>
            <person name="Furey T.S."/>
            <person name="Hinrichs A.S."/>
            <person name="Karolchik D."/>
            <person name="Kent W.J."/>
            <person name="Rosenbloom K.R."/>
            <person name="Trumbower H."/>
            <person name="Weirauch M."/>
            <person name="Cooper D.N."/>
            <person name="Stenson P.D."/>
            <person name="Ma B."/>
            <person name="Brent M."/>
            <person name="Arumugam M."/>
            <person name="Shteynberg D."/>
            <person name="Copley R.R."/>
            <person name="Taylor M.S."/>
            <person name="Riethman H."/>
            <person name="Mudunuri U."/>
            <person name="Peterson J."/>
            <person name="Guyer M."/>
            <person name="Felsenfeld A."/>
            <person name="Old S."/>
            <person name="Mockrin S."/>
            <person name="Collins F.S."/>
        </authorList>
    </citation>
    <scope>NUCLEOTIDE SEQUENCE [LARGE SCALE GENOMIC DNA]</scope>
    <source>
        <strain>Brown Norway</strain>
    </source>
</reference>
<reference key="3">
    <citation type="journal article" date="2004" name="Genome Res.">
        <title>The status, quality, and expansion of the NIH full-length cDNA project: the Mammalian Gene Collection (MGC).</title>
        <authorList>
            <consortium name="The MGC Project Team"/>
        </authorList>
    </citation>
    <scope>NUCLEOTIDE SEQUENCE [LARGE SCALE MRNA]</scope>
    <source>
        <tissue evidence="7">Ovary</tissue>
    </source>
</reference>
<reference evidence="10 11 12 13 14 15" key="4">
    <citation type="journal article" date="2015" name="J. Mol. Biol.">
        <title>The signature of the five-stranded vRRM fold defined by functional, structural and computational analysis of the hnRNP L protein.</title>
        <authorList>
            <person name="Blatter M."/>
            <person name="Dunin-Horkawicz S."/>
            <person name="Grishina I."/>
            <person name="Maris C."/>
            <person name="Thore S."/>
            <person name="Maier T."/>
            <person name="Bindereif A."/>
            <person name="Bujnicki J.M."/>
            <person name="Allain F.H."/>
        </authorList>
    </citation>
    <scope>STRUCTURE BY NMR OF 408-623</scope>
    <scope>X-RAY CRYSTALLOGRAPHY (1.35 ANGSTROMS) OF 31-245</scope>
    <scope>DOMAIN</scope>
    <scope>RNA-BINDING</scope>
</reference>
<protein>
    <recommendedName>
        <fullName>Heterogeneous nuclear ribonucleoprotein L</fullName>
        <shortName>hnRNP L</shortName>
    </recommendedName>
</protein>
<organism>
    <name type="scientific">Rattus norvegicus</name>
    <name type="common">Rat</name>
    <dbReference type="NCBI Taxonomy" id="10116"/>
    <lineage>
        <taxon>Eukaryota</taxon>
        <taxon>Metazoa</taxon>
        <taxon>Chordata</taxon>
        <taxon>Craniata</taxon>
        <taxon>Vertebrata</taxon>
        <taxon>Euteleostomi</taxon>
        <taxon>Mammalia</taxon>
        <taxon>Eutheria</taxon>
        <taxon>Euarchontoglires</taxon>
        <taxon>Glires</taxon>
        <taxon>Rodentia</taxon>
        <taxon>Myomorpha</taxon>
        <taxon>Muroidea</taxon>
        <taxon>Muridae</taxon>
        <taxon>Murinae</taxon>
        <taxon>Rattus</taxon>
    </lineage>
</organism>
<evidence type="ECO:0000250" key="1">
    <source>
        <dbReference type="UniProtKB" id="P14866"/>
    </source>
</evidence>
<evidence type="ECO:0000250" key="2">
    <source>
        <dbReference type="UniProtKB" id="Q8R081"/>
    </source>
</evidence>
<evidence type="ECO:0000255" key="3">
    <source>
        <dbReference type="PROSITE-ProRule" id="PRU00176"/>
    </source>
</evidence>
<evidence type="ECO:0000256" key="4">
    <source>
        <dbReference type="SAM" id="MobiDB-lite"/>
    </source>
</evidence>
<evidence type="ECO:0000269" key="5">
    <source>
    </source>
</evidence>
<evidence type="ECO:0000269" key="6">
    <source>
    </source>
</evidence>
<evidence type="ECO:0000312" key="7">
    <source>
        <dbReference type="EMBL" id="AAH86392.1"/>
    </source>
</evidence>
<evidence type="ECO:0000312" key="8">
    <source>
        <dbReference type="EMBL" id="BAG72209.1"/>
    </source>
</evidence>
<evidence type="ECO:0000312" key="9">
    <source>
        <dbReference type="RGD" id="71059"/>
    </source>
</evidence>
<evidence type="ECO:0007744" key="10">
    <source>
        <dbReference type="PDB" id="2MQL"/>
    </source>
</evidence>
<evidence type="ECO:0007744" key="11">
    <source>
        <dbReference type="PDB" id="2MQM"/>
    </source>
</evidence>
<evidence type="ECO:0007744" key="12">
    <source>
        <dbReference type="PDB" id="2MQN"/>
    </source>
</evidence>
<evidence type="ECO:0007744" key="13">
    <source>
        <dbReference type="PDB" id="2MQO"/>
    </source>
</evidence>
<evidence type="ECO:0007744" key="14">
    <source>
        <dbReference type="PDB" id="2MQP"/>
    </source>
</evidence>
<evidence type="ECO:0007744" key="15">
    <source>
        <dbReference type="PDB" id="2MQQ"/>
    </source>
</evidence>
<evidence type="ECO:0007829" key="16">
    <source>
        <dbReference type="PDB" id="2MQL"/>
    </source>
</evidence>
<evidence type="ECO:0007829" key="17">
    <source>
        <dbReference type="PDB" id="2MQM"/>
    </source>
</evidence>
<evidence type="ECO:0007829" key="18">
    <source>
        <dbReference type="PDB" id="2MQO"/>
    </source>
</evidence>
<evidence type="ECO:0007829" key="19">
    <source>
        <dbReference type="PDB" id="2MQP"/>
    </source>
</evidence>
<evidence type="ECO:0007829" key="20">
    <source>
        <dbReference type="PDB" id="2MQQ"/>
    </source>
</evidence>
<evidence type="ECO:0007829" key="21">
    <source>
        <dbReference type="PDB" id="4QPT"/>
    </source>
</evidence>